<sequence>MEKARISIRQLFVMIIIFELGSSLLITPGSMAGRDAWIAVLLGCAIGLFLFYLYQGIYQCYPNSSPKEYMDDMLGTKLSWLFSFLYILYFAYIAARVLRDFGEMLLTFAYHDTPIIIVNALLMVVSIYAVRKGIEVLARAAELLFGAMYLLGAIGLVLIIVSGTIDPHNLKPVLANGISPVLHSVFTQTMYVPFGEVVLFVMIFPNLNDRKDVKKMGMIAMAISGLIVALTVAINISVLDVDLTLRSQFPLLSTIQTIKVEEFLDRLDVFFMLALIIGGFFKVSLYLYATVVGTSTLFKEKNPSQLAYPMGLGILILSITIATNFSEHLNEGLNVVPLYIHLPFQLLFPLFLFIVAVWKKKRREKSKGEEAKK</sequence>
<keyword id="KW-1003">Cell membrane</keyword>
<keyword id="KW-0309">Germination</keyword>
<keyword id="KW-0472">Membrane</keyword>
<keyword id="KW-1185">Reference proteome</keyword>
<keyword id="KW-0812">Transmembrane</keyword>
<keyword id="KW-1133">Transmembrane helix</keyword>
<keyword id="KW-0813">Transport</keyword>
<dbReference type="EMBL" id="D78187">
    <property type="protein sequence ID" value="BAA11256.1"/>
    <property type="molecule type" value="Genomic_DNA"/>
</dbReference>
<dbReference type="EMBL" id="D50453">
    <property type="protein sequence ID" value="BAA09004.1"/>
    <property type="molecule type" value="Genomic_DNA"/>
</dbReference>
<dbReference type="EMBL" id="AL009126">
    <property type="protein sequence ID" value="CAB12180.1"/>
    <property type="molecule type" value="Genomic_DNA"/>
</dbReference>
<dbReference type="PIR" id="I39860">
    <property type="entry name" value="I39860"/>
</dbReference>
<dbReference type="RefSeq" id="NP_388254.1">
    <property type="nucleotide sequence ID" value="NC_000964.3"/>
</dbReference>
<dbReference type="RefSeq" id="WP_003234509.1">
    <property type="nucleotide sequence ID" value="NZ_OZ025638.1"/>
</dbReference>
<dbReference type="SMR" id="P49940"/>
<dbReference type="FunCoup" id="P49940">
    <property type="interactions" value="23"/>
</dbReference>
<dbReference type="STRING" id="224308.BSU03720"/>
<dbReference type="TCDB" id="2.A.3.9.3">
    <property type="family name" value="the amino acid-polyamine-organocation (apc) family"/>
</dbReference>
<dbReference type="PaxDb" id="224308-BSU03720"/>
<dbReference type="EnsemblBacteria" id="CAB12180">
    <property type="protein sequence ID" value="CAB12180"/>
    <property type="gene ID" value="BSU_03720"/>
</dbReference>
<dbReference type="GeneID" id="938282"/>
<dbReference type="KEGG" id="bsu:BSU03720"/>
<dbReference type="PATRIC" id="fig|224308.179.peg.392"/>
<dbReference type="eggNOG" id="COG1457">
    <property type="taxonomic scope" value="Bacteria"/>
</dbReference>
<dbReference type="InParanoid" id="P49940"/>
<dbReference type="OrthoDB" id="1891864at2"/>
<dbReference type="PhylomeDB" id="P49940"/>
<dbReference type="BioCyc" id="BSUB:BSU03720-MONOMER"/>
<dbReference type="Proteomes" id="UP000001570">
    <property type="component" value="Chromosome"/>
</dbReference>
<dbReference type="GO" id="GO:0005886">
    <property type="term" value="C:plasma membrane"/>
    <property type="evidence" value="ECO:0007669"/>
    <property type="project" value="UniProtKB-SubCell"/>
</dbReference>
<dbReference type="GO" id="GO:0009847">
    <property type="term" value="P:spore germination"/>
    <property type="evidence" value="ECO:0007669"/>
    <property type="project" value="InterPro"/>
</dbReference>
<dbReference type="InterPro" id="IPR004761">
    <property type="entry name" value="Spore_GerAB"/>
</dbReference>
<dbReference type="NCBIfam" id="TIGR00912">
    <property type="entry name" value="2A0309"/>
    <property type="match status" value="1"/>
</dbReference>
<dbReference type="PANTHER" id="PTHR34975">
    <property type="entry name" value="SPORE GERMINATION PROTEIN A2"/>
    <property type="match status" value="1"/>
</dbReference>
<dbReference type="PANTHER" id="PTHR34975:SF2">
    <property type="entry name" value="SPORE GERMINATION PROTEIN A2"/>
    <property type="match status" value="1"/>
</dbReference>
<dbReference type="Pfam" id="PF03845">
    <property type="entry name" value="Spore_permease"/>
    <property type="match status" value="1"/>
</dbReference>
<evidence type="ECO:0000255" key="1"/>
<evidence type="ECO:0000305" key="2"/>
<gene>
    <name type="primary">gerKB</name>
    <name type="ordered locus">BSU03720</name>
</gene>
<proteinExistence type="inferred from homology"/>
<name>GERKB_BACSU</name>
<protein>
    <recommendedName>
        <fullName>Spore germination protein KB</fullName>
    </recommendedName>
</protein>
<comment type="function">
    <text>Involved in the germination response to the combination of glucose, fructose, L-asparagine, and KCl.</text>
</comment>
<comment type="subcellular location">
    <subcellularLocation>
        <location evidence="2">Cell membrane</location>
        <topology evidence="2">Multi-pass membrane protein</topology>
    </subcellularLocation>
</comment>
<comment type="similarity">
    <text evidence="2">Belongs to the amino acid-polyamine-organocation (APC) superfamily. Spore germination protein (SGP) (TC 2.A.3.9) family.</text>
</comment>
<reference key="1">
    <citation type="submission" date="1995-11" db="EMBL/GenBank/DDBJ databases">
        <title>Nucleotide sequence and gene organization of the gerK spore germinating locus of Bacillus subtilis 168.</title>
        <authorList>
            <person name="Irie R."/>
            <person name="Fujita Y.Y.F."/>
            <person name="Kobayasi M."/>
        </authorList>
    </citation>
    <scope>NUCLEOTIDE SEQUENCE [GENOMIC DNA]</scope>
    <source>
        <strain>168</strain>
    </source>
</reference>
<reference key="2">
    <citation type="journal article" date="1996" name="Microbiology">
        <title>The 25 degrees-36 degrees region of the Bacillus subtilis chromosome: determination of the sequence of a 146 kb segment and identification of 113 genes.</title>
        <authorList>
            <person name="Yamane K."/>
            <person name="Kumano M."/>
            <person name="Kurita K."/>
        </authorList>
    </citation>
    <scope>NUCLEOTIDE SEQUENCE [GENOMIC DNA]</scope>
    <source>
        <strain>168</strain>
    </source>
</reference>
<reference key="3">
    <citation type="journal article" date="1997" name="Nature">
        <title>The complete genome sequence of the Gram-positive bacterium Bacillus subtilis.</title>
        <authorList>
            <person name="Kunst F."/>
            <person name="Ogasawara N."/>
            <person name="Moszer I."/>
            <person name="Albertini A.M."/>
            <person name="Alloni G."/>
            <person name="Azevedo V."/>
            <person name="Bertero M.G."/>
            <person name="Bessieres P."/>
            <person name="Bolotin A."/>
            <person name="Borchert S."/>
            <person name="Borriss R."/>
            <person name="Boursier L."/>
            <person name="Brans A."/>
            <person name="Braun M."/>
            <person name="Brignell S.C."/>
            <person name="Bron S."/>
            <person name="Brouillet S."/>
            <person name="Bruschi C.V."/>
            <person name="Caldwell B."/>
            <person name="Capuano V."/>
            <person name="Carter N.M."/>
            <person name="Choi S.-K."/>
            <person name="Codani J.-J."/>
            <person name="Connerton I.F."/>
            <person name="Cummings N.J."/>
            <person name="Daniel R.A."/>
            <person name="Denizot F."/>
            <person name="Devine K.M."/>
            <person name="Duesterhoeft A."/>
            <person name="Ehrlich S.D."/>
            <person name="Emmerson P.T."/>
            <person name="Entian K.-D."/>
            <person name="Errington J."/>
            <person name="Fabret C."/>
            <person name="Ferrari E."/>
            <person name="Foulger D."/>
            <person name="Fritz C."/>
            <person name="Fujita M."/>
            <person name="Fujita Y."/>
            <person name="Fuma S."/>
            <person name="Galizzi A."/>
            <person name="Galleron N."/>
            <person name="Ghim S.-Y."/>
            <person name="Glaser P."/>
            <person name="Goffeau A."/>
            <person name="Golightly E.J."/>
            <person name="Grandi G."/>
            <person name="Guiseppi G."/>
            <person name="Guy B.J."/>
            <person name="Haga K."/>
            <person name="Haiech J."/>
            <person name="Harwood C.R."/>
            <person name="Henaut A."/>
            <person name="Hilbert H."/>
            <person name="Holsappel S."/>
            <person name="Hosono S."/>
            <person name="Hullo M.-F."/>
            <person name="Itaya M."/>
            <person name="Jones L.-M."/>
            <person name="Joris B."/>
            <person name="Karamata D."/>
            <person name="Kasahara Y."/>
            <person name="Klaerr-Blanchard M."/>
            <person name="Klein C."/>
            <person name="Kobayashi Y."/>
            <person name="Koetter P."/>
            <person name="Koningstein G."/>
            <person name="Krogh S."/>
            <person name="Kumano M."/>
            <person name="Kurita K."/>
            <person name="Lapidus A."/>
            <person name="Lardinois S."/>
            <person name="Lauber J."/>
            <person name="Lazarevic V."/>
            <person name="Lee S.-M."/>
            <person name="Levine A."/>
            <person name="Liu H."/>
            <person name="Masuda S."/>
            <person name="Mauel C."/>
            <person name="Medigue C."/>
            <person name="Medina N."/>
            <person name="Mellado R.P."/>
            <person name="Mizuno M."/>
            <person name="Moestl D."/>
            <person name="Nakai S."/>
            <person name="Noback M."/>
            <person name="Noone D."/>
            <person name="O'Reilly M."/>
            <person name="Ogawa K."/>
            <person name="Ogiwara A."/>
            <person name="Oudega B."/>
            <person name="Park S.-H."/>
            <person name="Parro V."/>
            <person name="Pohl T.M."/>
            <person name="Portetelle D."/>
            <person name="Porwollik S."/>
            <person name="Prescott A.M."/>
            <person name="Presecan E."/>
            <person name="Pujic P."/>
            <person name="Purnelle B."/>
            <person name="Rapoport G."/>
            <person name="Rey M."/>
            <person name="Reynolds S."/>
            <person name="Rieger M."/>
            <person name="Rivolta C."/>
            <person name="Rocha E."/>
            <person name="Roche B."/>
            <person name="Rose M."/>
            <person name="Sadaie Y."/>
            <person name="Sato T."/>
            <person name="Scanlan E."/>
            <person name="Schleich S."/>
            <person name="Schroeter R."/>
            <person name="Scoffone F."/>
            <person name="Sekiguchi J."/>
            <person name="Sekowska A."/>
            <person name="Seror S.J."/>
            <person name="Serror P."/>
            <person name="Shin B.-S."/>
            <person name="Soldo B."/>
            <person name="Sorokin A."/>
            <person name="Tacconi E."/>
            <person name="Takagi T."/>
            <person name="Takahashi H."/>
            <person name="Takemaru K."/>
            <person name="Takeuchi M."/>
            <person name="Tamakoshi A."/>
            <person name="Tanaka T."/>
            <person name="Terpstra P."/>
            <person name="Tognoni A."/>
            <person name="Tosato V."/>
            <person name="Uchiyama S."/>
            <person name="Vandenbol M."/>
            <person name="Vannier F."/>
            <person name="Vassarotti A."/>
            <person name="Viari A."/>
            <person name="Wambutt R."/>
            <person name="Wedler E."/>
            <person name="Wedler H."/>
            <person name="Weitzenegger T."/>
            <person name="Winters P."/>
            <person name="Wipat A."/>
            <person name="Yamamoto H."/>
            <person name="Yamane K."/>
            <person name="Yasumoto K."/>
            <person name="Yata K."/>
            <person name="Yoshida K."/>
            <person name="Yoshikawa H.-F."/>
            <person name="Zumstein E."/>
            <person name="Yoshikawa H."/>
            <person name="Danchin A."/>
        </authorList>
    </citation>
    <scope>NUCLEOTIDE SEQUENCE [LARGE SCALE GENOMIC DNA]</scope>
    <source>
        <strain>168</strain>
    </source>
</reference>
<organism>
    <name type="scientific">Bacillus subtilis (strain 168)</name>
    <dbReference type="NCBI Taxonomy" id="224308"/>
    <lineage>
        <taxon>Bacteria</taxon>
        <taxon>Bacillati</taxon>
        <taxon>Bacillota</taxon>
        <taxon>Bacilli</taxon>
        <taxon>Bacillales</taxon>
        <taxon>Bacillaceae</taxon>
        <taxon>Bacillus</taxon>
    </lineage>
</organism>
<feature type="chain" id="PRO_0000087464" description="Spore germination protein KB">
    <location>
        <begin position="1"/>
        <end position="373"/>
    </location>
</feature>
<feature type="transmembrane region" description="Helical" evidence="1">
    <location>
        <begin position="11"/>
        <end position="31"/>
    </location>
</feature>
<feature type="transmembrane region" description="Helical" evidence="1">
    <location>
        <begin position="37"/>
        <end position="57"/>
    </location>
</feature>
<feature type="transmembrane region" description="Helical" evidence="1">
    <location>
        <begin position="78"/>
        <end position="98"/>
    </location>
</feature>
<feature type="transmembrane region" description="Helical" evidence="1">
    <location>
        <begin position="105"/>
        <end position="125"/>
    </location>
</feature>
<feature type="transmembrane region" description="Helical" evidence="1">
    <location>
        <begin position="143"/>
        <end position="163"/>
    </location>
</feature>
<feature type="transmembrane region" description="Helical" evidence="1">
    <location>
        <begin position="185"/>
        <end position="205"/>
    </location>
</feature>
<feature type="transmembrane region" description="Helical" evidence="1">
    <location>
        <begin position="219"/>
        <end position="239"/>
    </location>
</feature>
<feature type="transmembrane region" description="Helical" evidence="1">
    <location>
        <begin position="269"/>
        <end position="289"/>
    </location>
</feature>
<feature type="transmembrane region" description="Helical" evidence="1">
    <location>
        <begin position="306"/>
        <end position="326"/>
    </location>
</feature>
<feature type="transmembrane region" description="Helical" evidence="1">
    <location>
        <begin position="338"/>
        <end position="358"/>
    </location>
</feature>
<accession>P49940</accession>